<name>TXS3A_CUPSA</name>
<reference key="1">
    <citation type="journal article" date="2012" name="FEBS J.">
        <title>Multicomponent venom of the spider Cupiennius salei: a bioanalytical investigation applying different strategies.</title>
        <authorList>
            <person name="Trachsel C."/>
            <person name="Siegemund D."/>
            <person name="Kampfer U."/>
            <person name="Kopp L.S."/>
            <person name="Buhr C."/>
            <person name="Grossmann J."/>
            <person name="Luthi C."/>
            <person name="Cunningham M."/>
            <person name="Nentwig W."/>
            <person name="Kuhn-Nentwig L."/>
            <person name="Schurch S."/>
            <person name="Schaller J."/>
        </authorList>
    </citation>
    <scope>PROTEIN SEQUENCE</scope>
    <scope>MASS SPECTROMETRY</scope>
    <scope>AMIDATION AT GLU-20</scope>
    <source>
        <tissue>Venom</tissue>
    </source>
</reference>
<reference key="2">
    <citation type="unpublished observations" date="2015-06">
        <authorList>
            <person name="Kuhn-Nentwig L."/>
            <person name="Gohel T."/>
        </authorList>
    </citation>
    <scope>NOMENCLATURE</scope>
</reference>
<organism>
    <name type="scientific">Cupiennius salei</name>
    <name type="common">American wandering spider</name>
    <dbReference type="NCBI Taxonomy" id="6928"/>
    <lineage>
        <taxon>Eukaryota</taxon>
        <taxon>Metazoa</taxon>
        <taxon>Ecdysozoa</taxon>
        <taxon>Arthropoda</taxon>
        <taxon>Chelicerata</taxon>
        <taxon>Arachnida</taxon>
        <taxon>Araneae</taxon>
        <taxon>Araneomorphae</taxon>
        <taxon>Entelegynae</taxon>
        <taxon>Lycosoidea</taxon>
        <taxon>Ctenidae</taxon>
        <taxon>Cupiennius</taxon>
    </lineage>
</organism>
<comment type="subcellular location">
    <subcellularLocation>
        <location evidence="1">Secreted</location>
    </subcellularLocation>
</comment>
<comment type="tissue specificity">
    <text evidence="5">Expressed by the venom gland.</text>
</comment>
<comment type="mass spectrometry"/>
<comment type="similarity">
    <text evidence="4">Belongs to the cationic peptide 04 (cupiennin) family. 03 subfamily.</text>
</comment>
<sequence>FLGKKVLKAVGKQAAKKQME</sequence>
<keyword id="KW-0027">Amidation</keyword>
<keyword id="KW-0903">Direct protein sequencing</keyword>
<keyword id="KW-0558">Oxidation</keyword>
<keyword id="KW-0964">Secreted</keyword>
<keyword id="KW-0800">Toxin</keyword>
<dbReference type="ArachnoServer" id="AS001716">
    <property type="toxin name" value="Short-cationic-peptide-No1-Cupiennius salei"/>
</dbReference>
<dbReference type="GO" id="GO:0005576">
    <property type="term" value="C:extracellular region"/>
    <property type="evidence" value="ECO:0007669"/>
    <property type="project" value="UniProtKB-SubCell"/>
</dbReference>
<dbReference type="GO" id="GO:0090729">
    <property type="term" value="F:toxin activity"/>
    <property type="evidence" value="ECO:0007669"/>
    <property type="project" value="UniProtKB-KW"/>
</dbReference>
<dbReference type="GO" id="GO:0042742">
    <property type="term" value="P:defense response to bacterium"/>
    <property type="evidence" value="ECO:0007669"/>
    <property type="project" value="InterPro"/>
</dbReference>
<dbReference type="InterPro" id="IPR035164">
    <property type="entry name" value="Cupiennin"/>
</dbReference>
<dbReference type="Pfam" id="PF17563">
    <property type="entry name" value="Cu"/>
    <property type="match status" value="1"/>
</dbReference>
<protein>
    <recommendedName>
        <fullName evidence="3">Short cationic peptide-3a</fullName>
        <shortName evidence="3">SCP-3a</shortName>
    </recommendedName>
    <alternativeName>
        <fullName evidence="2">Short cationic peptide-3e</fullName>
        <shortName evidence="2">SCP-3e</shortName>
    </alternativeName>
    <alternativeName>
        <fullName evidence="3">Truncated variant of Cupiennin 3 family</fullName>
    </alternativeName>
</protein>
<accession>B3EWV5</accession>
<evidence type="ECO:0000269" key="1">
    <source>
    </source>
</evidence>
<evidence type="ECO:0000303" key="2">
    <source>
    </source>
</evidence>
<evidence type="ECO:0000303" key="3">
    <source ref="2"/>
</evidence>
<evidence type="ECO:0000305" key="4"/>
<evidence type="ECO:0000305" key="5">
    <source>
    </source>
</evidence>
<feature type="peptide" id="PRO_0000421212" description="Short cationic peptide-3a" evidence="1">
    <location>
        <begin position="1"/>
        <end position="20"/>
    </location>
</feature>
<feature type="modified residue" description="Glutamic acid 1-amide" evidence="1">
    <location>
        <position position="20"/>
    </location>
</feature>
<proteinExistence type="evidence at protein level"/>